<comment type="similarity">
    <text evidence="1">Belongs to the UPF0102 family.</text>
</comment>
<proteinExistence type="inferred from homology"/>
<sequence>MKTLTRMQLGALGEQLAVEHLSGQGLQILTRNWRCRYGELDVIACEAATRTVVFVEVKTRTGDGYGGLAQAVTEGKVRRLRRLAGLWLAGQDRGWAAVRLDVIGVRIGRSANPEITHLMGVG</sequence>
<name>Y2060_MYCUA</name>
<dbReference type="EMBL" id="CP000325">
    <property type="protein sequence ID" value="ABL04494.1"/>
    <property type="molecule type" value="Genomic_DNA"/>
</dbReference>
<dbReference type="RefSeq" id="WP_011740111.1">
    <property type="nucleotide sequence ID" value="NC_008611.1"/>
</dbReference>
<dbReference type="SMR" id="A0PQ75"/>
<dbReference type="KEGG" id="mul:MUL_2060"/>
<dbReference type="eggNOG" id="COG0792">
    <property type="taxonomic scope" value="Bacteria"/>
</dbReference>
<dbReference type="HOGENOM" id="CLU_115353_2_3_11"/>
<dbReference type="Proteomes" id="UP000000765">
    <property type="component" value="Chromosome"/>
</dbReference>
<dbReference type="GO" id="GO:0003676">
    <property type="term" value="F:nucleic acid binding"/>
    <property type="evidence" value="ECO:0007669"/>
    <property type="project" value="InterPro"/>
</dbReference>
<dbReference type="CDD" id="cd20736">
    <property type="entry name" value="PoNe_Nuclease"/>
    <property type="match status" value="1"/>
</dbReference>
<dbReference type="Gene3D" id="3.40.1350.10">
    <property type="match status" value="1"/>
</dbReference>
<dbReference type="HAMAP" id="MF_00048">
    <property type="entry name" value="UPF0102"/>
    <property type="match status" value="1"/>
</dbReference>
<dbReference type="InterPro" id="IPR011335">
    <property type="entry name" value="Restrct_endonuc-II-like"/>
</dbReference>
<dbReference type="InterPro" id="IPR011856">
    <property type="entry name" value="tRNA_endonuc-like_dom_sf"/>
</dbReference>
<dbReference type="InterPro" id="IPR003509">
    <property type="entry name" value="UPF0102_YraN-like"/>
</dbReference>
<dbReference type="NCBIfam" id="NF009150">
    <property type="entry name" value="PRK12497.1-3"/>
    <property type="match status" value="1"/>
</dbReference>
<dbReference type="NCBIfam" id="NF009153">
    <property type="entry name" value="PRK12497.3-1"/>
    <property type="match status" value="1"/>
</dbReference>
<dbReference type="NCBIfam" id="NF009154">
    <property type="entry name" value="PRK12497.3-3"/>
    <property type="match status" value="1"/>
</dbReference>
<dbReference type="NCBIfam" id="TIGR00252">
    <property type="entry name" value="YraN family protein"/>
    <property type="match status" value="1"/>
</dbReference>
<dbReference type="PANTHER" id="PTHR34039">
    <property type="entry name" value="UPF0102 PROTEIN YRAN"/>
    <property type="match status" value="1"/>
</dbReference>
<dbReference type="PANTHER" id="PTHR34039:SF1">
    <property type="entry name" value="UPF0102 PROTEIN YRAN"/>
    <property type="match status" value="1"/>
</dbReference>
<dbReference type="Pfam" id="PF02021">
    <property type="entry name" value="UPF0102"/>
    <property type="match status" value="1"/>
</dbReference>
<dbReference type="SUPFAM" id="SSF52980">
    <property type="entry name" value="Restriction endonuclease-like"/>
    <property type="match status" value="1"/>
</dbReference>
<gene>
    <name type="ordered locus">MUL_2060</name>
</gene>
<feature type="chain" id="PRO_0000336210" description="UPF0102 protein MUL_2060">
    <location>
        <begin position="1"/>
        <end position="122"/>
    </location>
</feature>
<protein>
    <recommendedName>
        <fullName evidence="1">UPF0102 protein MUL_2060</fullName>
    </recommendedName>
</protein>
<evidence type="ECO:0000255" key="1">
    <source>
        <dbReference type="HAMAP-Rule" id="MF_00048"/>
    </source>
</evidence>
<accession>A0PQ75</accession>
<reference key="1">
    <citation type="journal article" date="2007" name="Genome Res.">
        <title>Reductive evolution and niche adaptation inferred from the genome of Mycobacterium ulcerans, the causative agent of Buruli ulcer.</title>
        <authorList>
            <person name="Stinear T.P."/>
            <person name="Seemann T."/>
            <person name="Pidot S."/>
            <person name="Frigui W."/>
            <person name="Reysset G."/>
            <person name="Garnier T."/>
            <person name="Meurice G."/>
            <person name="Simon D."/>
            <person name="Bouchier C."/>
            <person name="Ma L."/>
            <person name="Tichit M."/>
            <person name="Porter J.L."/>
            <person name="Ryan J."/>
            <person name="Johnson P.D.R."/>
            <person name="Davies J.K."/>
            <person name="Jenkin G.A."/>
            <person name="Small P.L.C."/>
            <person name="Jones L.M."/>
            <person name="Tekaia F."/>
            <person name="Laval F."/>
            <person name="Daffe M."/>
            <person name="Parkhill J."/>
            <person name="Cole S.T."/>
        </authorList>
    </citation>
    <scope>NUCLEOTIDE SEQUENCE [LARGE SCALE GENOMIC DNA]</scope>
    <source>
        <strain>Agy99</strain>
    </source>
</reference>
<organism>
    <name type="scientific">Mycobacterium ulcerans (strain Agy99)</name>
    <dbReference type="NCBI Taxonomy" id="362242"/>
    <lineage>
        <taxon>Bacteria</taxon>
        <taxon>Bacillati</taxon>
        <taxon>Actinomycetota</taxon>
        <taxon>Actinomycetes</taxon>
        <taxon>Mycobacteriales</taxon>
        <taxon>Mycobacteriaceae</taxon>
        <taxon>Mycobacterium</taxon>
        <taxon>Mycobacterium ulcerans group</taxon>
    </lineage>
</organism>